<feature type="chain" id="PRO_0000244847" description="Protein Tat">
    <location>
        <begin position="1"/>
        <end position="99"/>
    </location>
</feature>
<feature type="region of interest" description="Transactivation" evidence="1">
    <location>
        <begin position="1"/>
        <end position="48"/>
    </location>
</feature>
<feature type="region of interest" description="Interaction with human CREBBP" evidence="1">
    <location>
        <begin position="1"/>
        <end position="24"/>
    </location>
</feature>
<feature type="region of interest" description="Disordered" evidence="2">
    <location>
        <begin position="1"/>
        <end position="20"/>
    </location>
</feature>
<feature type="region of interest" description="Cysteine-rich" evidence="1">
    <location>
        <begin position="22"/>
        <end position="37"/>
    </location>
</feature>
<feature type="region of interest" description="Core" evidence="1">
    <location>
        <begin position="38"/>
        <end position="48"/>
    </location>
</feature>
<feature type="region of interest" description="Disordered" evidence="2">
    <location>
        <begin position="48"/>
        <end position="99"/>
    </location>
</feature>
<feature type="region of interest" description="Interaction with the host capping enzyme RNGTT" evidence="1">
    <location>
        <begin position="49"/>
        <end position="86"/>
    </location>
</feature>
<feature type="short sequence motif" description="Nuclear localization signal, RNA-binding (TAR), and protein transduction" evidence="1">
    <location>
        <begin position="49"/>
        <end position="57"/>
    </location>
</feature>
<feature type="compositionally biased region" description="Basic and acidic residues" evidence="2">
    <location>
        <begin position="85"/>
        <end position="99"/>
    </location>
</feature>
<feature type="binding site" evidence="1">
    <location>
        <position position="22"/>
    </location>
    <ligand>
        <name>Zn(2+)</name>
        <dbReference type="ChEBI" id="CHEBI:29105"/>
        <label>1</label>
    </ligand>
</feature>
<feature type="binding site" evidence="1">
    <location>
        <position position="25"/>
    </location>
    <ligand>
        <name>Zn(2+)</name>
        <dbReference type="ChEBI" id="CHEBI:29105"/>
        <label>2</label>
    </ligand>
</feature>
<feature type="binding site" evidence="1">
    <location>
        <position position="27"/>
    </location>
    <ligand>
        <name>Zn(2+)</name>
        <dbReference type="ChEBI" id="CHEBI:29105"/>
        <label>2</label>
    </ligand>
</feature>
<feature type="binding site" evidence="1">
    <location>
        <position position="30"/>
    </location>
    <ligand>
        <name>Zn(2+)</name>
        <dbReference type="ChEBI" id="CHEBI:29105"/>
        <label>2</label>
    </ligand>
</feature>
<feature type="binding site" evidence="1">
    <location>
        <position position="33"/>
    </location>
    <ligand>
        <name>Zn(2+)</name>
        <dbReference type="ChEBI" id="CHEBI:29105"/>
        <label>1</label>
    </ligand>
</feature>
<feature type="binding site" evidence="1">
    <location>
        <position position="34"/>
    </location>
    <ligand>
        <name>Zn(2+)</name>
        <dbReference type="ChEBI" id="CHEBI:29105"/>
        <label>1</label>
    </ligand>
</feature>
<feature type="binding site" evidence="1">
    <location>
        <position position="37"/>
    </location>
    <ligand>
        <name>Zn(2+)</name>
        <dbReference type="ChEBI" id="CHEBI:29105"/>
        <label>1</label>
    </ligand>
</feature>
<feature type="site" description="Essential for Tat translocation through the endosomal membrane" evidence="1">
    <location>
        <position position="11"/>
    </location>
</feature>
<feature type="modified residue" description="N6-acetyllysine; by host PCAF" evidence="1">
    <location>
        <position position="28"/>
    </location>
</feature>
<feature type="modified residue" description="N6-acetyllysine; by host EP300 and GCN5L2" evidence="1">
    <location>
        <position position="50"/>
    </location>
</feature>
<feature type="modified residue" description="N6-acetyllysine; by host EP300 and GCN5L2" evidence="1">
    <location>
        <position position="51"/>
    </location>
</feature>
<feature type="modified residue" description="Asymmetric dimethylarginine; by host PRMT6" evidence="1">
    <location>
        <position position="52"/>
    </location>
</feature>
<feature type="modified residue" description="Asymmetric dimethylarginine; by host PRMT6" evidence="1">
    <location>
        <position position="53"/>
    </location>
</feature>
<feature type="cross-link" description="Glycyl lysine isopeptide (Lys-Gly) (interchain with G-Cter in ubiquitin)" evidence="1">
    <location>
        <position position="71"/>
    </location>
</feature>
<feature type="splice variant" id="VSP_022402" description="In isoform Short.">
    <location>
        <begin position="73"/>
        <end position="99"/>
    </location>
</feature>
<reference key="1">
    <citation type="journal article" date="1998" name="J. Virol.">
        <title>A comprehensive panel of near-full-length clones and reference sequences for non-subtype B isolates of human immunodeficiency virus type 1.</title>
        <authorList>
            <person name="Gao F."/>
            <person name="Robertson D.L."/>
            <person name="Carruthers C.D."/>
            <person name="Morrison S.G."/>
            <person name="Jian B."/>
            <person name="Chen Y."/>
            <person name="Barre-Sinoussi F."/>
            <person name="Girard M."/>
            <person name="Srinivasan A."/>
            <person name="Abimiku A.G."/>
            <person name="Shaw G.M."/>
            <person name="Sharp P.M."/>
            <person name="Hahn B.H."/>
        </authorList>
    </citation>
    <scope>NUCLEOTIDE SEQUENCE [GENOMIC DNA]</scope>
</reference>
<reference key="2">
    <citation type="journal article" date="2005" name="Microbes Infect.">
        <title>Decoding Tat: the biology of HIV Tat posttranslational modifications.</title>
        <authorList>
            <person name="Hetzer C."/>
            <person name="Dormeyer W."/>
            <person name="Schnolzer M."/>
            <person name="Ott M."/>
        </authorList>
    </citation>
    <scope>REVIEW</scope>
    <scope>ALTERNATIVE SPLICING</scope>
</reference>
<reference key="3">
    <citation type="journal article" date="2006" name="Front. Biosci.">
        <title>The multiple functions of HIV-1 Tat: proliferation versus apoptosis.</title>
        <authorList>
            <person name="Peruzzi F."/>
        </authorList>
    </citation>
    <scope>REVIEW</scope>
</reference>
<reference key="4">
    <citation type="journal article" date="2006" name="Microbes Infect.">
        <title>HIV tat and neurotoxicity.</title>
        <authorList>
            <person name="King J.E."/>
            <person name="Eugenin E.A."/>
            <person name="Buckner C.M."/>
            <person name="Berman J.W."/>
        </authorList>
    </citation>
    <scope>REVIEW</scope>
</reference>
<comment type="function">
    <text evidence="1">Transcriptional activator that increases RNA Pol II processivity, thereby increasing the level of full-length viral transcripts. Recognizes a hairpin structure at the 5'-LTR of the nascent viral mRNAs referred to as the transactivation responsive RNA element (TAR) and recruits the cyclin T1-CDK9 complex (P-TEFb complex) that will in turn hyperphosphorylate the RNA polymerase II to allow efficient elongation. The CDK9 component of P-TEFb and other Tat-activated kinases hyperphosphorylate the C-terminus of RNA Pol II that becomes stabilized and much more processive. Other factors such as HTATSF1/Tat-SF1, SUPT5H/SPT5, and HTATIP2 are also important for Tat's function. Besides its effect on RNA Pol II processivity, Tat induces chromatin remodeling of proviral genes by recruiting the histone acetyltransferases (HATs) CREBBP, EP300 and PCAF to the chromatin. This also contributes to the increase in proviral transcription rate, especially when the provirus integrates in transcriptionally silent region of the host genome. To ensure maximal activation of the LTR, Tat mediates nuclear translocation of NF-kappa-B by interacting with host RELA. Through its interaction with host TBP, Tat may also modulate transcription initiation. Tat can reactivate a latently infected cell by penetrating in it and transactivating its LTR promoter. In the cytoplasm, Tat is thought to act as a translational activator of HIV-1 mRNAs.</text>
</comment>
<comment type="function">
    <text evidence="1">Extracellular circulating Tat can be endocytosed by surrounding uninfected cells via the binding to several surface receptors such as CD26, CXCR4, heparan sulfate proteoglycans (HSPG) or LDLR. Neurons are rarely infected, but they internalize Tat via their LDLR. Through its interaction with nuclear HATs, Tat is potentially able to control the acetylation-dependent cellular gene expression. Modulates the expression of many cellular genes involved in cell survival, proliferation or in coding for cytokines or cytokine receptors. Tat plays a role in T-cell and neurons apoptosis. Tat induced neurotoxicity and apoptosis probably contribute to neuroAIDS. Circulating Tat also acts as a chemokine-like and/or growth factor-like molecule that binds to specific receptors on the surface of the cells, affecting many cellular pathways. In the vascular system, Tat binds to ITGAV/ITGB3 and ITGA5/ITGB1 integrins dimers at the surface of endothelial cells and competes with bFGF for heparin-binding sites, leading to an excess of soluble bFGF.</text>
</comment>
<comment type="subunit">
    <text evidence="1">Interacts with host CCNT1. Associates with the P-TEFb complex composed at least of Tat, P-TEFb (CDK9 and CCNT1), TAR RNA, RNA Pol II. Recruits the HATs CREBBP, TAF1/TFIID, EP300, PCAF and GCN5L2. Interacts with host KAT5/Tip60; this interaction targets the latter to degradation. Interacts with the host deacetylase SIRT1. Interacts with host capping enzyme RNGTT; this interaction stimulates RNGTT. Binds to host KDR, and to the host integrins ITGAV/ITGB3 and ITGA5/ITGB1. Interacts with host KPNB1/importin beta-1 without previous binding to KPNA1/importin alpha-1. Interacts with EIF2AK2. Interacts with host nucleosome assembly protein NAP1L1; this interaction may be required for the transport of Tat within the nucleus, since the two proteins interact at the nuclear rim. Interacts with host C1QBP/SF2P32; this interaction involves lysine-acetylated Tat. Interacts with the host chemokine receptors CCR2, CCR3 and CXCR4. Interacts with host DPP4/CD26; this interaction may trigger an anti-proliferative effect. Interacts with host LDLR. Interacts with the host extracellular matrix metalloproteinase MMP1. Interacts with host PRMT6; this interaction mediates Tat's methylation. Interacts with, and is ubiquitinated by MDM2/Hdm2. Interacts with host PSMC3 and HTATIP2. Interacts with STAB1; this interaction may overcome SATB1-mediated repression of IL2 and IL2RA (interleukin) in T cells by binding to the same domain than HDAC1. Interacts (when acetylated) with human CDK13, thereby increasing HIV-1 mRNA splicing and promoting the production of the doubly spliced HIV-1 protein Nef. Interacts with host TBP; this interaction modulates the activity of transcriptional pre-initiation complex. Interacts with host RELA. Interacts with host PLSCR1; this interaction negatively regulates Tat transactivation activity by altering its subcellular distribution.</text>
</comment>
<comment type="subcellular location">
    <subcellularLocation>
        <location evidence="1">Host nucleus</location>
        <location evidence="1">Host nucleolus</location>
    </subcellularLocation>
    <subcellularLocation>
        <location evidence="1">Host cytoplasm</location>
    </subcellularLocation>
    <subcellularLocation>
        <location evidence="1">Secreted</location>
    </subcellularLocation>
    <text evidence="1">Probably localizes to both nuclear and nucleolar compartments. Nuclear localization is mediated through the interaction of the nuclear localization signal with importin KPNB1. Secretion occurs through a Golgi-independent pathway. Tat is released from infected cells to the extracellular space where it remains associated to the cell membrane, or is secreted into the cerebrospinal fluid and sera. Extracellular Tat can be endocytosed by surrounding uninfected cells via binding to several receptors depending on the cell type.</text>
</comment>
<comment type="alternative products">
    <event type="alternative splicing"/>
    <isoform>
        <id>O70889-1</id>
        <name>Long</name>
        <sequence type="displayed"/>
    </isoform>
    <isoform>
        <id>O70889-2</id>
        <name>Short</name>
        <sequence type="described" ref="VSP_022402"/>
    </isoform>
</comment>
<comment type="domain">
    <text evidence="1">The cell attachment site mediates the interaction with ITGAV/ITGB3 and ITGA5/ITGB1 integrins, leading to vascular cell migration and invasion. This interaction also provides endothelial cells with the adhesion signal they require to grow in response to mitogens.</text>
</comment>
<comment type="domain">
    <text evidence="1">The Cys-rich region may bind 2 zinc ions. This region is involved in binding to KAT5.</text>
</comment>
<comment type="domain">
    <text evidence="1">The transactivation domain mediates the interaction with CCNT1, GCN5L2, and MDM2.</text>
</comment>
<comment type="domain">
    <text evidence="1">The Arg-rich RNA-binding region binds the TAR RNA. This region also mediates the nuclear localization through direct binding to KPNB1 and is involved in Tat's transfer across cell membranes (protein transduction). The same region is required for the interaction with EP300, PCAF, EIF2AK2 and KDR.</text>
</comment>
<comment type="PTM">
    <text evidence="1">Asymmetrical arginine methylation by host PRMT6 seems to diminish the transactivation capacity of Tat and affects the interaction with host CCNT1.</text>
</comment>
<comment type="PTM">
    <text evidence="1">Acetylation by EP300, CREBBP, GCN5L2/GCN5 and PCAF regulates the transactivation activity of Tat. EP300-mediated acetylation of Lys-50 promotes dissociation of Tat from the TAR RNA through the competitive binding to PCAF's bromodomain. In addition, the non-acetylated Tat's N-terminus can also interact with PCAF. PCAF-mediated acetylation of Lys-28 enhances Tat's binding to CCNT1. Lys-50 is deacetylated by SIRT1.</text>
</comment>
<comment type="PTM">
    <text evidence="1">Polyubiquitination by host MDM2 does not target Tat to degradation, but activates its transactivation function and fosters interaction with CCNT1 and TAR RNA.</text>
</comment>
<comment type="PTM">
    <text evidence="1">Phosphorylated by EIF2AK2 on serine and threonine residues adjacent to the basic region important for TAR RNA binding and function. Phosphorylation of Tat by EIF2AK2 is dependent on the prior activation of EIF2AK2 by dsRNA.</text>
</comment>
<comment type="miscellaneous">
    <text evidence="1">HIV-1 lineages are divided in three main groups, M (for Major), O (for Outlier), and N (for New, or Non-M, Non-O). The vast majority of strains found worldwide belong to the group M. Group O seems to be endemic to and largely confined to Cameroon and neighboring countries in West Central Africa, where these viruses represent a small minority of HIV-1 strains. The group N is represented by a limited number of isolates from Cameroonian persons. The group M is further subdivided in 9 clades or subtypes (A to D, F to H, J and K).</text>
</comment>
<comment type="miscellaneous">
    <molecule>Isoform Short</molecule>
    <text evidence="3">Expressed in the late stage of the infection cycle, when unspliced viral RNAs are exported to the cytoplasm by the viral Rev protein.</text>
</comment>
<comment type="similarity">
    <text evidence="1">Belongs to the lentiviruses Tat family.</text>
</comment>
<keyword id="KW-0007">Acetylation</keyword>
<keyword id="KW-0010">Activator</keyword>
<keyword id="KW-0014">AIDS</keyword>
<keyword id="KW-0025">Alternative splicing</keyword>
<keyword id="KW-0053">Apoptosis</keyword>
<keyword id="KW-1035">Host cytoplasm</keyword>
<keyword id="KW-1048">Host nucleus</keyword>
<keyword id="KW-0945">Host-virus interaction</keyword>
<keyword id="KW-1090">Inhibition of host innate immune response by virus</keyword>
<keyword id="KW-1114">Inhibition of host interferon signaling pathway by virus</keyword>
<keyword id="KW-0922">Interferon antiviral system evasion</keyword>
<keyword id="KW-1017">Isopeptide bond</keyword>
<keyword id="KW-0479">Metal-binding</keyword>
<keyword id="KW-0488">Methylation</keyword>
<keyword id="KW-1122">Modulation of host chromatin by virus</keyword>
<keyword id="KW-1126">Modulation of host PP1 activity by virus</keyword>
<keyword id="KW-0597">Phosphoprotein</keyword>
<keyword id="KW-1185">Reference proteome</keyword>
<keyword id="KW-0694">RNA-binding</keyword>
<keyword id="KW-0964">Secreted</keyword>
<keyword id="KW-0804">Transcription</keyword>
<keyword id="KW-0805">Transcription regulation</keyword>
<keyword id="KW-0832">Ubl conjugation</keyword>
<keyword id="KW-0899">Viral immunoevasion</keyword>
<keyword id="KW-0862">Zinc</keyword>
<sequence>MELVDPNLDPWNHPGSQPTTPCTRCYCKWCCFHCYWCFTTKGLGISYGRKKRRQRPRTPQSSQIHQDFVPKQPISQARGNPTGPKESKKEVESKAKTDP</sequence>
<protein>
    <recommendedName>
        <fullName evidence="1">Protein Tat</fullName>
    </recommendedName>
    <alternativeName>
        <fullName evidence="1">Transactivating regulatory protein</fullName>
    </alternativeName>
</protein>
<proteinExistence type="inferred from homology"/>
<dbReference type="EMBL" id="AF005494">
    <property type="protein sequence ID" value="AAD03167.1"/>
    <property type="molecule type" value="Genomic_DNA"/>
</dbReference>
<dbReference type="SMR" id="O70889"/>
<dbReference type="Proteomes" id="UP000007687">
    <property type="component" value="Segment"/>
</dbReference>
<dbReference type="GO" id="GO:0005576">
    <property type="term" value="C:extracellular region"/>
    <property type="evidence" value="ECO:0007669"/>
    <property type="project" value="UniProtKB-SubCell"/>
</dbReference>
<dbReference type="GO" id="GO:0030430">
    <property type="term" value="C:host cell cytoplasm"/>
    <property type="evidence" value="ECO:0007669"/>
    <property type="project" value="UniProtKB-SubCell"/>
</dbReference>
<dbReference type="GO" id="GO:0044196">
    <property type="term" value="C:host cell nucleolus"/>
    <property type="evidence" value="ECO:0007669"/>
    <property type="project" value="UniProtKB-SubCell"/>
</dbReference>
<dbReference type="GO" id="GO:0042805">
    <property type="term" value="F:actinin binding"/>
    <property type="evidence" value="ECO:0007669"/>
    <property type="project" value="UniProtKB-UniRule"/>
</dbReference>
<dbReference type="GO" id="GO:0030332">
    <property type="term" value="F:cyclin binding"/>
    <property type="evidence" value="ECO:0007669"/>
    <property type="project" value="UniProtKB-UniRule"/>
</dbReference>
<dbReference type="GO" id="GO:0046872">
    <property type="term" value="F:metal ion binding"/>
    <property type="evidence" value="ECO:0007669"/>
    <property type="project" value="UniProtKB-UniRule"/>
</dbReference>
<dbReference type="GO" id="GO:0019904">
    <property type="term" value="F:protein domain specific binding"/>
    <property type="evidence" value="ECO:0007669"/>
    <property type="project" value="UniProtKB-UniRule"/>
</dbReference>
<dbReference type="GO" id="GO:0004865">
    <property type="term" value="F:protein serine/threonine phosphatase inhibitor activity"/>
    <property type="evidence" value="ECO:0007669"/>
    <property type="project" value="UniProtKB-KW"/>
</dbReference>
<dbReference type="GO" id="GO:0001070">
    <property type="term" value="F:RNA-binding transcription regulator activity"/>
    <property type="evidence" value="ECO:0007669"/>
    <property type="project" value="UniProtKB-UniRule"/>
</dbReference>
<dbReference type="GO" id="GO:1990970">
    <property type="term" value="F:trans-activation response element binding"/>
    <property type="evidence" value="ECO:0007669"/>
    <property type="project" value="UniProtKB-UniRule"/>
</dbReference>
<dbReference type="GO" id="GO:0006351">
    <property type="term" value="P:DNA-templated transcription"/>
    <property type="evidence" value="ECO:0007669"/>
    <property type="project" value="UniProtKB-UniRule"/>
</dbReference>
<dbReference type="GO" id="GO:0032968">
    <property type="term" value="P:positive regulation of transcription elongation by RNA polymerase II"/>
    <property type="evidence" value="ECO:0007669"/>
    <property type="project" value="UniProtKB-UniRule"/>
</dbReference>
<dbReference type="GO" id="GO:0050434">
    <property type="term" value="P:positive regulation of viral transcription"/>
    <property type="evidence" value="ECO:0007669"/>
    <property type="project" value="UniProtKB-UniRule"/>
</dbReference>
<dbReference type="GO" id="GO:0039525">
    <property type="term" value="P:symbiont-mediated perturbation of host chromatin organization"/>
    <property type="evidence" value="ECO:0007669"/>
    <property type="project" value="UniProtKB-UniRule"/>
</dbReference>
<dbReference type="GO" id="GO:0052170">
    <property type="term" value="P:symbiont-mediated suppression of host innate immune response"/>
    <property type="evidence" value="ECO:0007669"/>
    <property type="project" value="UniProtKB-KW"/>
</dbReference>
<dbReference type="GO" id="GO:0039606">
    <property type="term" value="P:symbiont-mediated suppression of host translation initiation"/>
    <property type="evidence" value="ECO:0007669"/>
    <property type="project" value="UniProtKB-KW"/>
</dbReference>
<dbReference type="GO" id="GO:0039502">
    <property type="term" value="P:symbiont-mediated suppression of host type I interferon-mediated signaling pathway"/>
    <property type="evidence" value="ECO:0007669"/>
    <property type="project" value="UniProtKB-UniRule"/>
</dbReference>
<dbReference type="Gene3D" id="4.10.20.10">
    <property type="entry name" value="Tat domain"/>
    <property type="match status" value="1"/>
</dbReference>
<dbReference type="HAMAP" id="MF_04079">
    <property type="entry name" value="HIV_TAT"/>
    <property type="match status" value="1"/>
</dbReference>
<dbReference type="InterPro" id="IPR001831">
    <property type="entry name" value="IV_Tat"/>
</dbReference>
<dbReference type="InterPro" id="IPR036963">
    <property type="entry name" value="Tat_dom_sf"/>
</dbReference>
<dbReference type="Pfam" id="PF00539">
    <property type="entry name" value="Tat"/>
    <property type="match status" value="1"/>
</dbReference>
<dbReference type="PRINTS" id="PR00055">
    <property type="entry name" value="HIVTATDOMAIN"/>
</dbReference>
<gene>
    <name evidence="1" type="primary">tat</name>
</gene>
<organismHost>
    <name type="scientific">Homo sapiens</name>
    <name type="common">Human</name>
    <dbReference type="NCBI Taxonomy" id="9606"/>
</organismHost>
<name>TAT_HV193</name>
<accession>O70889</accession>
<organism>
    <name type="scientific">Human immunodeficiency virus type 1 group M subtype F1 (isolate 93BR020)</name>
    <name type="common">HIV-1</name>
    <dbReference type="NCBI Taxonomy" id="388814"/>
    <lineage>
        <taxon>Viruses</taxon>
        <taxon>Riboviria</taxon>
        <taxon>Pararnavirae</taxon>
        <taxon>Artverviricota</taxon>
        <taxon>Revtraviricetes</taxon>
        <taxon>Ortervirales</taxon>
        <taxon>Retroviridae</taxon>
        <taxon>Orthoretrovirinae</taxon>
        <taxon>Lentivirus</taxon>
        <taxon>Human immunodeficiency virus type 1</taxon>
    </lineage>
</organism>
<evidence type="ECO:0000255" key="1">
    <source>
        <dbReference type="HAMAP-Rule" id="MF_04079"/>
    </source>
</evidence>
<evidence type="ECO:0000256" key="2">
    <source>
        <dbReference type="SAM" id="MobiDB-lite"/>
    </source>
</evidence>
<evidence type="ECO:0000305" key="3"/>